<organism>
    <name type="scientific">Buxus microphylla</name>
    <name type="common">Littleleaf boxwood</name>
    <name type="synonym">Japanese boxwood</name>
    <dbReference type="NCBI Taxonomy" id="153571"/>
    <lineage>
        <taxon>Eukaryota</taxon>
        <taxon>Viridiplantae</taxon>
        <taxon>Streptophyta</taxon>
        <taxon>Embryophyta</taxon>
        <taxon>Tracheophyta</taxon>
        <taxon>Spermatophyta</taxon>
        <taxon>Magnoliopsida</taxon>
        <taxon>Buxales</taxon>
        <taxon>Buxaceae</taxon>
        <taxon>Buxus</taxon>
    </lineage>
</organism>
<feature type="chain" id="PRO_0000354559" description="Large ribosomal subunit protein uL22c">
    <location>
        <begin position="1"/>
        <end position="156"/>
    </location>
</feature>
<geneLocation type="chloroplast"/>
<proteinExistence type="inferred from homology"/>
<name>RK22_BUXMI</name>
<sequence length="156" mass="18166">MIKKNRDAEVYALGQHICMSAHKARRVIDQIRGRSYEEALMILELMPYRACYPIFKLVYSAAANASHNMGFNEADSVISKAEVNDGTSVKKLKPRARGRSYLIKRPTCHITIVLKDIYLDEKYIIWLRKYGWIYRNKYTDMTCRDMYGSGGVWDKK</sequence>
<protein>
    <recommendedName>
        <fullName evidence="2">Large ribosomal subunit protein uL22c</fullName>
    </recommendedName>
    <alternativeName>
        <fullName>50S ribosomal protein L22, chloroplastic</fullName>
    </alternativeName>
</protein>
<evidence type="ECO:0000250" key="1"/>
<evidence type="ECO:0000305" key="2"/>
<accession>A6MM76</accession>
<reference key="1">
    <citation type="journal article" date="2007" name="Mol. Phylogenet. Evol.">
        <title>Phylogenetic and evolutionary implications of complete chloroplast genome sequences of four early-diverging angiosperms: Buxus (Buxaceae), Chloranthus (Chloranthaceae), Dioscorea (Dioscoreaceae), and Illicium (Schisandraceae).</title>
        <authorList>
            <person name="Hansen D.R."/>
            <person name="Dastidar S.G."/>
            <person name="Cai Z."/>
            <person name="Penaflor C."/>
            <person name="Kuehl J.V."/>
            <person name="Boore J.L."/>
            <person name="Jansen R.K."/>
        </authorList>
    </citation>
    <scope>NUCLEOTIDE SEQUENCE [LARGE SCALE GENOMIC DNA]</scope>
</reference>
<dbReference type="EMBL" id="EF380351">
    <property type="protein sequence ID" value="ABQ45288.1"/>
    <property type="molecule type" value="Genomic_DNA"/>
</dbReference>
<dbReference type="RefSeq" id="YP_001294224.1">
    <property type="nucleotide sequence ID" value="NC_009599.1"/>
</dbReference>
<dbReference type="SMR" id="A6MM76"/>
<dbReference type="GeneID" id="5236867"/>
<dbReference type="GO" id="GO:0009507">
    <property type="term" value="C:chloroplast"/>
    <property type="evidence" value="ECO:0007669"/>
    <property type="project" value="UniProtKB-SubCell"/>
</dbReference>
<dbReference type="GO" id="GO:0015934">
    <property type="term" value="C:large ribosomal subunit"/>
    <property type="evidence" value="ECO:0007669"/>
    <property type="project" value="InterPro"/>
</dbReference>
<dbReference type="GO" id="GO:0019843">
    <property type="term" value="F:rRNA binding"/>
    <property type="evidence" value="ECO:0007669"/>
    <property type="project" value="UniProtKB-UniRule"/>
</dbReference>
<dbReference type="GO" id="GO:0003735">
    <property type="term" value="F:structural constituent of ribosome"/>
    <property type="evidence" value="ECO:0007669"/>
    <property type="project" value="InterPro"/>
</dbReference>
<dbReference type="GO" id="GO:0006412">
    <property type="term" value="P:translation"/>
    <property type="evidence" value="ECO:0007669"/>
    <property type="project" value="UniProtKB-UniRule"/>
</dbReference>
<dbReference type="CDD" id="cd00336">
    <property type="entry name" value="Ribosomal_L22"/>
    <property type="match status" value="1"/>
</dbReference>
<dbReference type="FunFam" id="3.90.470.10:FF:000006">
    <property type="entry name" value="50S ribosomal protein L22, chloroplastic"/>
    <property type="match status" value="1"/>
</dbReference>
<dbReference type="Gene3D" id="3.90.470.10">
    <property type="entry name" value="Ribosomal protein L22/L17"/>
    <property type="match status" value="1"/>
</dbReference>
<dbReference type="HAMAP" id="MF_01331_B">
    <property type="entry name" value="Ribosomal_uL22_B"/>
    <property type="match status" value="1"/>
</dbReference>
<dbReference type="InterPro" id="IPR001063">
    <property type="entry name" value="Ribosomal_uL22"/>
</dbReference>
<dbReference type="InterPro" id="IPR005727">
    <property type="entry name" value="Ribosomal_uL22_bac/chlpt-type"/>
</dbReference>
<dbReference type="InterPro" id="IPR047867">
    <property type="entry name" value="Ribosomal_uL22_bac/org-type"/>
</dbReference>
<dbReference type="InterPro" id="IPR018260">
    <property type="entry name" value="Ribosomal_uL22_CS"/>
</dbReference>
<dbReference type="InterPro" id="IPR036394">
    <property type="entry name" value="Ribosomal_uL22_sf"/>
</dbReference>
<dbReference type="NCBIfam" id="TIGR01044">
    <property type="entry name" value="rplV_bact"/>
    <property type="match status" value="1"/>
</dbReference>
<dbReference type="PANTHER" id="PTHR13501">
    <property type="entry name" value="CHLOROPLAST 50S RIBOSOMAL PROTEIN L22-RELATED"/>
    <property type="match status" value="1"/>
</dbReference>
<dbReference type="PANTHER" id="PTHR13501:SF10">
    <property type="entry name" value="LARGE RIBOSOMAL SUBUNIT PROTEIN UL22M"/>
    <property type="match status" value="1"/>
</dbReference>
<dbReference type="Pfam" id="PF00237">
    <property type="entry name" value="Ribosomal_L22"/>
    <property type="match status" value="1"/>
</dbReference>
<dbReference type="SUPFAM" id="SSF54843">
    <property type="entry name" value="Ribosomal protein L22"/>
    <property type="match status" value="1"/>
</dbReference>
<dbReference type="PROSITE" id="PS00464">
    <property type="entry name" value="RIBOSOMAL_L22"/>
    <property type="match status" value="1"/>
</dbReference>
<gene>
    <name type="primary">rpl22</name>
</gene>
<keyword id="KW-0150">Chloroplast</keyword>
<keyword id="KW-0934">Plastid</keyword>
<keyword id="KW-0687">Ribonucleoprotein</keyword>
<keyword id="KW-0689">Ribosomal protein</keyword>
<keyword id="KW-0694">RNA-binding</keyword>
<keyword id="KW-0699">rRNA-binding</keyword>
<comment type="function">
    <text evidence="1">This protein binds specifically to 23S rRNA.</text>
</comment>
<comment type="function">
    <text evidence="1">The globular domain of the protein is located near the polypeptide exit tunnel on the outside of the subunit, while an extended beta-hairpin is found that lines the wall of the exit tunnel in the center of the 70S ribosome.</text>
</comment>
<comment type="subunit">
    <text evidence="1">Part of the 50S ribosomal subunit.</text>
</comment>
<comment type="subcellular location">
    <subcellularLocation>
        <location>Plastid</location>
        <location>Chloroplast</location>
    </subcellularLocation>
</comment>
<comment type="similarity">
    <text evidence="2">Belongs to the universal ribosomal protein uL22 family.</text>
</comment>